<accession>P03263</accession>
<protein>
    <recommendedName>
        <fullName>I-leader protein</fullName>
    </recommendedName>
</protein>
<sequence length="145" mass="16102">MRADREELDLPPPVGGVAVDVVKVEVPATGRTLVLAFVKTCAVLAAVHGLYILHEVDLTTAHKEAEWEFEPLAWRVWLVVFYFGCLSLTVWLLEGSYGGSDHHAARAQSPDVRARRSELDDNIAQMGAVHGLELPRRQVLRHRGT</sequence>
<organism>
    <name type="scientific">Human adenovirus C serotype 2</name>
    <name type="common">HAdV-2</name>
    <name type="synonym">Human adenovirus 2</name>
    <dbReference type="NCBI Taxonomy" id="10515"/>
    <lineage>
        <taxon>Viruses</taxon>
        <taxon>Varidnaviria</taxon>
        <taxon>Bamfordvirae</taxon>
        <taxon>Preplasmiviricota</taxon>
        <taxon>Tectiliviricetes</taxon>
        <taxon>Rowavirales</taxon>
        <taxon>Adenoviridae</taxon>
        <taxon>Mastadenovirus</taxon>
        <taxon>Human mastadenovirus C</taxon>
    </lineage>
</organism>
<proteinExistence type="evidence at transcript level"/>
<keyword id="KW-1035">Host cytoplasm</keyword>
<keyword id="KW-1185">Reference proteome</keyword>
<comment type="subcellular location">
    <subcellularLocation>
        <location evidence="1">Host cytoplasm</location>
        <location evidence="1">Host perinuclear region</location>
    </subcellularLocation>
    <text>Might be loosely associated with the nuclear membrane.</text>
</comment>
<comment type="induction">
    <text evidence="3">Expressed in the intermediate phase of the viral replicative cycle.</text>
</comment>
<comment type="miscellaneous">
    <text>Expressed from the major late promoter (MLP) and produced by alternative splicing. Only protein expressed from the MLP during the intermediate phase. In the late phase, this region is spliced to allow expression of all late proteins.</text>
</comment>
<comment type="miscellaneous">
    <text>Very stable protein with a low turnover rate.</text>
</comment>
<comment type="sequence caution" evidence="2">
    <conflict type="miscellaneous discrepancy">
        <sequence resource="EMBL-CDS" id="AAA92207"/>
    </conflict>
    <text>The last 5 amino acids (C-terminus) are possibly generated by alternative splicing.</text>
</comment>
<feature type="chain" id="PRO_0000221687" description="I-leader protein">
    <location>
        <begin position="1"/>
        <end position="145"/>
    </location>
</feature>
<organismHost>
    <name type="scientific">Homo sapiens</name>
    <name type="common">Human</name>
    <dbReference type="NCBI Taxonomy" id="9606"/>
</organismHost>
<reference key="1">
    <citation type="journal article" date="1982" name="Nucleic Acids Res.">
        <title>An adenovirus agnogene.</title>
        <authorList>
            <person name="Virtanen A."/>
            <person name="Alestroem P."/>
            <person name="Persson H."/>
            <person name="Katze M.G."/>
            <person name="Pettersson U."/>
        </authorList>
    </citation>
    <scope>NUCLEOTIDE SEQUENCE [GENOMIC DNA]</scope>
</reference>
<reference key="2">
    <citation type="journal article" date="1982" name="J. Biol. Chem.">
        <title>Nucleotide sequences from the adenovirus-2 genome.</title>
        <authorList>
            <person name="Gingeras T.R."/>
            <person name="Sciaky D."/>
            <person name="Gelinas R.E."/>
            <person name="Bing-Dong J."/>
            <person name="Yen C.E."/>
            <person name="Kelly M.M."/>
            <person name="Bullock P.A."/>
            <person name="Parsons B.L."/>
            <person name="O'Neill K.E."/>
            <person name="Roberts R.J."/>
        </authorList>
    </citation>
    <scope>NUCLEOTIDE SEQUENCE [GENOMIC DNA]</scope>
</reference>
<reference key="3">
    <citation type="journal article" date="1982" name="J. Biol. Chem.">
        <title>DNA sequence analysis of the region encoding the terminal protein and the hypothetical N-gene product of adenovirus type 2.</title>
        <authorList>
            <person name="Alestroem P."/>
            <person name="Akusjaervi G."/>
            <person name="Pettersson M."/>
            <person name="Pettersson U."/>
        </authorList>
    </citation>
    <scope>NUCLEOTIDE SEQUENCE [GENOMIC DNA]</scope>
</reference>
<reference key="4">
    <citation type="journal article" date="1986" name="J. Virol.">
        <title>Biosynthesis of adenovirus type 2 i-leader protein.</title>
        <authorList>
            <person name="Symington J.S."/>
            <person name="Lucher L.A."/>
            <person name="Brackmann K.H."/>
            <person name="Virtanen A."/>
            <person name="Pettersson U."/>
            <person name="Green M."/>
        </authorList>
    </citation>
    <scope>IDENTIFICATION</scope>
    <scope>INDUCTION</scope>
    <scope>SUBCELLULAR LOCATION</scope>
</reference>
<reference key="5">
    <citation type="journal article" date="2012" name="Nat. Methods">
        <title>De novo derivation of proteomes from transcriptomes for transcript and protein identification.</title>
        <authorList>
            <person name="Evans V.C."/>
            <person name="Barker G."/>
            <person name="Heesom K.J."/>
            <person name="Fan J."/>
            <person name="Bessant C."/>
            <person name="Matthews D.A."/>
        </authorList>
    </citation>
    <scope>IDENTIFICATION</scope>
    <source>
        <strain>Human adenovirus C serotype 5</strain>
    </source>
</reference>
<dbReference type="EMBL" id="J01917">
    <property type="protein sequence ID" value="AAA92207.1"/>
    <property type="status" value="ALT_SEQ"/>
    <property type="molecule type" value="Genomic_DNA"/>
</dbReference>
<dbReference type="PIR" id="A93421">
    <property type="entry name" value="DQAD62"/>
</dbReference>
<dbReference type="RefSeq" id="NP_040517.2">
    <property type="nucleotide sequence ID" value="NC_001405.1"/>
</dbReference>
<dbReference type="GeneID" id="2652993"/>
<dbReference type="Proteomes" id="UP000008167">
    <property type="component" value="Segment"/>
</dbReference>
<dbReference type="GO" id="GO:0044220">
    <property type="term" value="C:host cell perinuclear region of cytoplasm"/>
    <property type="evidence" value="ECO:0007669"/>
    <property type="project" value="UniProtKB-SubCell"/>
</dbReference>
<dbReference type="InterPro" id="IPR004292">
    <property type="entry name" value="L1-like"/>
</dbReference>
<dbReference type="Pfam" id="PF03052">
    <property type="entry name" value="Adeno_52K"/>
    <property type="match status" value="1"/>
</dbReference>
<name>LEAD_ADE02</name>
<evidence type="ECO:0000269" key="1">
    <source>
    </source>
</evidence>
<evidence type="ECO:0000305" key="2"/>
<evidence type="ECO:0000305" key="3">
    <source>
    </source>
</evidence>